<proteinExistence type="inferred from homology"/>
<gene>
    <name evidence="1" type="primary">rpsP</name>
    <name type="ordered locus">Rsph17029_2709</name>
</gene>
<comment type="similarity">
    <text evidence="1">Belongs to the bacterial ribosomal protein bS16 family.</text>
</comment>
<accession>A3PN95</accession>
<organism>
    <name type="scientific">Cereibacter sphaeroides (strain ATCC 17029 / ATH 2.4.9)</name>
    <name type="common">Rhodobacter sphaeroides</name>
    <dbReference type="NCBI Taxonomy" id="349101"/>
    <lineage>
        <taxon>Bacteria</taxon>
        <taxon>Pseudomonadati</taxon>
        <taxon>Pseudomonadota</taxon>
        <taxon>Alphaproteobacteria</taxon>
        <taxon>Rhodobacterales</taxon>
        <taxon>Paracoccaceae</taxon>
        <taxon>Cereibacter</taxon>
    </lineage>
</organism>
<sequence>MAMKIRLARGGSKKRPHYSIVASDSRMPRDGRFLEKLGTYNPLLAKDSEDRIKMNLERVQYWLAQGAQPTDRVARFLEAAGLKEKAVRNNPKAAVPGKRMAELAKKKADRAAASAE</sequence>
<protein>
    <recommendedName>
        <fullName evidence="1">Small ribosomal subunit protein bS16</fullName>
    </recommendedName>
    <alternativeName>
        <fullName evidence="3">30S ribosomal protein S16</fullName>
    </alternativeName>
</protein>
<keyword id="KW-0687">Ribonucleoprotein</keyword>
<keyword id="KW-0689">Ribosomal protein</keyword>
<evidence type="ECO:0000255" key="1">
    <source>
        <dbReference type="HAMAP-Rule" id="MF_00385"/>
    </source>
</evidence>
<evidence type="ECO:0000256" key="2">
    <source>
        <dbReference type="SAM" id="MobiDB-lite"/>
    </source>
</evidence>
<evidence type="ECO:0000305" key="3"/>
<name>RS16_CERS1</name>
<reference key="1">
    <citation type="submission" date="2007-02" db="EMBL/GenBank/DDBJ databases">
        <title>Complete sequence of chromosome 1 of Rhodobacter sphaeroides ATCC 17029.</title>
        <authorList>
            <person name="Copeland A."/>
            <person name="Lucas S."/>
            <person name="Lapidus A."/>
            <person name="Barry K."/>
            <person name="Detter J.C."/>
            <person name="Glavina del Rio T."/>
            <person name="Hammon N."/>
            <person name="Israni S."/>
            <person name="Dalin E."/>
            <person name="Tice H."/>
            <person name="Pitluck S."/>
            <person name="Kiss H."/>
            <person name="Brettin T."/>
            <person name="Bruce D."/>
            <person name="Han C."/>
            <person name="Tapia R."/>
            <person name="Gilna P."/>
            <person name="Schmutz J."/>
            <person name="Larimer F."/>
            <person name="Land M."/>
            <person name="Hauser L."/>
            <person name="Kyrpides N."/>
            <person name="Mikhailova N."/>
            <person name="Richardson P."/>
            <person name="Mackenzie C."/>
            <person name="Choudhary M."/>
            <person name="Donohue T.J."/>
            <person name="Kaplan S."/>
        </authorList>
    </citation>
    <scope>NUCLEOTIDE SEQUENCE [LARGE SCALE GENOMIC DNA]</scope>
    <source>
        <strain>ATCC 17029 / ATH 2.4.9</strain>
    </source>
</reference>
<feature type="chain" id="PRO_1000049330" description="Small ribosomal subunit protein bS16">
    <location>
        <begin position="1"/>
        <end position="116"/>
    </location>
</feature>
<feature type="region of interest" description="Disordered" evidence="2">
    <location>
        <begin position="88"/>
        <end position="116"/>
    </location>
</feature>
<feature type="compositionally biased region" description="Basic and acidic residues" evidence="2">
    <location>
        <begin position="99"/>
        <end position="110"/>
    </location>
</feature>
<dbReference type="EMBL" id="CP000577">
    <property type="protein sequence ID" value="ABN77811.1"/>
    <property type="molecule type" value="Genomic_DNA"/>
</dbReference>
<dbReference type="RefSeq" id="WP_009563092.1">
    <property type="nucleotide sequence ID" value="NC_009049.1"/>
</dbReference>
<dbReference type="SMR" id="A3PN95"/>
<dbReference type="GeneID" id="67447821"/>
<dbReference type="KEGG" id="rsh:Rsph17029_2709"/>
<dbReference type="HOGENOM" id="CLU_100590_3_1_5"/>
<dbReference type="GO" id="GO:0005737">
    <property type="term" value="C:cytoplasm"/>
    <property type="evidence" value="ECO:0007669"/>
    <property type="project" value="UniProtKB-ARBA"/>
</dbReference>
<dbReference type="GO" id="GO:0015935">
    <property type="term" value="C:small ribosomal subunit"/>
    <property type="evidence" value="ECO:0007669"/>
    <property type="project" value="TreeGrafter"/>
</dbReference>
<dbReference type="GO" id="GO:0003735">
    <property type="term" value="F:structural constituent of ribosome"/>
    <property type="evidence" value="ECO:0007669"/>
    <property type="project" value="InterPro"/>
</dbReference>
<dbReference type="GO" id="GO:0006412">
    <property type="term" value="P:translation"/>
    <property type="evidence" value="ECO:0007669"/>
    <property type="project" value="UniProtKB-UniRule"/>
</dbReference>
<dbReference type="Gene3D" id="3.30.1320.10">
    <property type="match status" value="1"/>
</dbReference>
<dbReference type="HAMAP" id="MF_00385">
    <property type="entry name" value="Ribosomal_bS16"/>
    <property type="match status" value="1"/>
</dbReference>
<dbReference type="InterPro" id="IPR000307">
    <property type="entry name" value="Ribosomal_bS16"/>
</dbReference>
<dbReference type="InterPro" id="IPR023803">
    <property type="entry name" value="Ribosomal_bS16_dom_sf"/>
</dbReference>
<dbReference type="NCBIfam" id="TIGR00002">
    <property type="entry name" value="S16"/>
    <property type="match status" value="1"/>
</dbReference>
<dbReference type="PANTHER" id="PTHR12919">
    <property type="entry name" value="30S RIBOSOMAL PROTEIN S16"/>
    <property type="match status" value="1"/>
</dbReference>
<dbReference type="PANTHER" id="PTHR12919:SF20">
    <property type="entry name" value="SMALL RIBOSOMAL SUBUNIT PROTEIN BS16M"/>
    <property type="match status" value="1"/>
</dbReference>
<dbReference type="Pfam" id="PF00886">
    <property type="entry name" value="Ribosomal_S16"/>
    <property type="match status" value="1"/>
</dbReference>
<dbReference type="SUPFAM" id="SSF54565">
    <property type="entry name" value="Ribosomal protein S16"/>
    <property type="match status" value="1"/>
</dbReference>